<comment type="function">
    <text>May be involved in the transport of PQQ or its precursor to the periplasm.</text>
</comment>
<comment type="pathway">
    <text evidence="1">Cofactor biosynthesis; pyrroloquinoline quinone biosynthesis.</text>
</comment>
<comment type="similarity">
    <text evidence="1">Belongs to the PqqB family.</text>
</comment>
<name>PQQB_METFL</name>
<feature type="chain" id="PRO_0000220002" description="Coenzyme PQQ synthesis protein B">
    <location>
        <begin position="1"/>
        <end position="305"/>
    </location>
</feature>
<organism>
    <name type="scientific">Methylobacillus flagellatus</name>
    <dbReference type="NCBI Taxonomy" id="405"/>
    <lineage>
        <taxon>Bacteria</taxon>
        <taxon>Pseudomonadati</taxon>
        <taxon>Pseudomonadota</taxon>
        <taxon>Betaproteobacteria</taxon>
        <taxon>Nitrosomonadales</taxon>
        <taxon>Methylophilaceae</taxon>
        <taxon>Methylobacillus</taxon>
    </lineage>
</organism>
<reference key="1">
    <citation type="journal article" date="1996" name="FEMS Microbiol. Lett.">
        <title>Identification and characterization of the pqqDGC gene cluster involved in pyrroloquinoline quinone production in an obligate methylotroph Methylobacillus flagellatum.</title>
        <authorList>
            <person name="Gomelsky M."/>
            <person name="Biville F."/>
            <person name="Gasser F."/>
            <person name="Tsygankov Y.D."/>
        </authorList>
    </citation>
    <scope>NUCLEOTIDE SEQUENCE [GENOMIC DNA]</scope>
</reference>
<sequence length="305" mass="33432">MHIHVLGSAAGGGFPQWNCNCPNCDGLRKGTIKAKKRTQSSICVSADGINWVLFNTSPDILQQIQEFAPLQPGRAIRDTGVVGIVLIDAQIDHTTGLLMLREGQVKREIYCTDMVYQDLTTGNPLLNILDHYCGVNRHDIPIDGKHSFSVEHAPGLRFTAVALKSAAPPYSPHRHDPHPGDTIGVLIEDLNNGKKAFYAPGLGEIEPHLPALMEQADCIMVDGTFWTDTEMLDMGLMSKKARDIGHNPQSGPGGMMEVLDGYPGARRVLIHINNTNPILREDSAERVELTRRGIEVAYDGMDIIL</sequence>
<evidence type="ECO:0000255" key="1">
    <source>
        <dbReference type="HAMAP-Rule" id="MF_00653"/>
    </source>
</evidence>
<gene>
    <name evidence="1" type="primary">pqqB</name>
    <name type="synonym">pqqD</name>
</gene>
<keyword id="KW-0884">PQQ biosynthesis</keyword>
<keyword id="KW-0813">Transport</keyword>
<dbReference type="EMBL" id="L78064">
    <property type="protein sequence ID" value="AAB42380.1"/>
    <property type="molecule type" value="Genomic_DNA"/>
</dbReference>
<dbReference type="SMR" id="Q50437"/>
<dbReference type="UniPathway" id="UPA00539"/>
<dbReference type="GO" id="GO:0018189">
    <property type="term" value="P:pyrroloquinoline quinone biosynthetic process"/>
    <property type="evidence" value="ECO:0007669"/>
    <property type="project" value="UniProtKB-UniRule"/>
</dbReference>
<dbReference type="CDD" id="cd16274">
    <property type="entry name" value="PQQB-like_MBL-fold"/>
    <property type="match status" value="1"/>
</dbReference>
<dbReference type="Gene3D" id="3.60.15.10">
    <property type="entry name" value="Ribonuclease Z/Hydroxyacylglutathione hydrolase-like"/>
    <property type="match status" value="1"/>
</dbReference>
<dbReference type="HAMAP" id="MF_00653">
    <property type="entry name" value="PQQ_syn_PqqB"/>
    <property type="match status" value="1"/>
</dbReference>
<dbReference type="InterPro" id="IPR001279">
    <property type="entry name" value="Metallo-B-lactamas"/>
</dbReference>
<dbReference type="InterPro" id="IPR011842">
    <property type="entry name" value="PQQ_synth_PqqB"/>
</dbReference>
<dbReference type="InterPro" id="IPR036866">
    <property type="entry name" value="RibonucZ/Hydroxyglut_hydro"/>
</dbReference>
<dbReference type="NCBIfam" id="TIGR02108">
    <property type="entry name" value="PQQ_syn_pqqB"/>
    <property type="match status" value="1"/>
</dbReference>
<dbReference type="PANTHER" id="PTHR42663:SF7">
    <property type="entry name" value="COENZYME PQQ SYNTHESIS PROTEIN B"/>
    <property type="match status" value="1"/>
</dbReference>
<dbReference type="PANTHER" id="PTHR42663">
    <property type="entry name" value="HYDROLASE C777.06C-RELATED-RELATED"/>
    <property type="match status" value="1"/>
</dbReference>
<dbReference type="Pfam" id="PF12706">
    <property type="entry name" value="Lactamase_B_2"/>
    <property type="match status" value="1"/>
</dbReference>
<dbReference type="SUPFAM" id="SSF56281">
    <property type="entry name" value="Metallo-hydrolase/oxidoreductase"/>
    <property type="match status" value="1"/>
</dbReference>
<proteinExistence type="inferred from homology"/>
<accession>Q50437</accession>
<protein>
    <recommendedName>
        <fullName evidence="1">Coenzyme PQQ synthesis protein B</fullName>
    </recommendedName>
    <alternativeName>
        <fullName>Coenzyme PQQ synthesis protein D</fullName>
    </alternativeName>
    <alternativeName>
        <fullName evidence="1">Pyrroloquinoline quinone biosynthesis protein B</fullName>
    </alternativeName>
</protein>